<proteinExistence type="inferred from homology"/>
<dbReference type="EMBL" id="CP001283">
    <property type="protein sequence ID" value="ACK88115.1"/>
    <property type="molecule type" value="Genomic_DNA"/>
</dbReference>
<dbReference type="RefSeq" id="WP_000776441.1">
    <property type="nucleotide sequence ID" value="NC_011773.1"/>
</dbReference>
<dbReference type="SMR" id="B7JJ88"/>
<dbReference type="KEGG" id="bcu:BCAH820_3822"/>
<dbReference type="HOGENOM" id="CLU_089475_6_3_9"/>
<dbReference type="Proteomes" id="UP000001363">
    <property type="component" value="Chromosome"/>
</dbReference>
<dbReference type="GO" id="GO:0005829">
    <property type="term" value="C:cytosol"/>
    <property type="evidence" value="ECO:0007669"/>
    <property type="project" value="TreeGrafter"/>
</dbReference>
<dbReference type="GO" id="GO:0043024">
    <property type="term" value="F:ribosomal small subunit binding"/>
    <property type="evidence" value="ECO:0007669"/>
    <property type="project" value="TreeGrafter"/>
</dbReference>
<dbReference type="GO" id="GO:0030490">
    <property type="term" value="P:maturation of SSU-rRNA"/>
    <property type="evidence" value="ECO:0007669"/>
    <property type="project" value="UniProtKB-UniRule"/>
</dbReference>
<dbReference type="FunFam" id="3.30.300.20:FF:000009">
    <property type="entry name" value="Ribosome-binding factor A"/>
    <property type="match status" value="1"/>
</dbReference>
<dbReference type="Gene3D" id="3.30.300.20">
    <property type="match status" value="1"/>
</dbReference>
<dbReference type="HAMAP" id="MF_00003">
    <property type="entry name" value="RbfA"/>
    <property type="match status" value="1"/>
</dbReference>
<dbReference type="InterPro" id="IPR015946">
    <property type="entry name" value="KH_dom-like_a/b"/>
</dbReference>
<dbReference type="InterPro" id="IPR000238">
    <property type="entry name" value="RbfA"/>
</dbReference>
<dbReference type="InterPro" id="IPR023799">
    <property type="entry name" value="RbfA_dom_sf"/>
</dbReference>
<dbReference type="InterPro" id="IPR020053">
    <property type="entry name" value="Ribosome-bd_factorA_CS"/>
</dbReference>
<dbReference type="NCBIfam" id="TIGR00082">
    <property type="entry name" value="rbfA"/>
    <property type="match status" value="1"/>
</dbReference>
<dbReference type="PANTHER" id="PTHR33515">
    <property type="entry name" value="RIBOSOME-BINDING FACTOR A, CHLOROPLASTIC-RELATED"/>
    <property type="match status" value="1"/>
</dbReference>
<dbReference type="PANTHER" id="PTHR33515:SF1">
    <property type="entry name" value="RIBOSOME-BINDING FACTOR A, CHLOROPLASTIC-RELATED"/>
    <property type="match status" value="1"/>
</dbReference>
<dbReference type="Pfam" id="PF02033">
    <property type="entry name" value="RBFA"/>
    <property type="match status" value="1"/>
</dbReference>
<dbReference type="SUPFAM" id="SSF89919">
    <property type="entry name" value="Ribosome-binding factor A, RbfA"/>
    <property type="match status" value="1"/>
</dbReference>
<dbReference type="PROSITE" id="PS01319">
    <property type="entry name" value="RBFA"/>
    <property type="match status" value="1"/>
</dbReference>
<accession>B7JJ88</accession>
<reference key="1">
    <citation type="submission" date="2008-10" db="EMBL/GenBank/DDBJ databases">
        <title>Genome sequence of Bacillus cereus AH820.</title>
        <authorList>
            <person name="Dodson R.J."/>
            <person name="Durkin A.S."/>
            <person name="Rosovitz M.J."/>
            <person name="Rasko D.A."/>
            <person name="Hoffmaster A."/>
            <person name="Ravel J."/>
            <person name="Sutton G."/>
        </authorList>
    </citation>
    <scope>NUCLEOTIDE SEQUENCE [LARGE SCALE GENOMIC DNA]</scope>
    <source>
        <strain>AH820</strain>
    </source>
</reference>
<gene>
    <name evidence="1" type="primary">rbfA</name>
    <name type="ordered locus">BCAH820_3822</name>
</gene>
<protein>
    <recommendedName>
        <fullName evidence="1">Ribosome-binding factor A</fullName>
    </recommendedName>
</protein>
<name>RBFA_BACC0</name>
<sequence length="118" mass="13441">MKLRANRVGEQMKKELGDIISRKIKDPRVGFVTVTDVQVSGDLQIATVYISVLGDEEQKENTLKGLAKAKGFIRSEIGQRIRLRKTPEISFEFDESIGYGHRIDTLLHEINKEGKREE</sequence>
<keyword id="KW-0963">Cytoplasm</keyword>
<keyword id="KW-0690">Ribosome biogenesis</keyword>
<evidence type="ECO:0000255" key="1">
    <source>
        <dbReference type="HAMAP-Rule" id="MF_00003"/>
    </source>
</evidence>
<feature type="chain" id="PRO_1000193229" description="Ribosome-binding factor A">
    <location>
        <begin position="1"/>
        <end position="118"/>
    </location>
</feature>
<organism>
    <name type="scientific">Bacillus cereus (strain AH820)</name>
    <dbReference type="NCBI Taxonomy" id="405535"/>
    <lineage>
        <taxon>Bacteria</taxon>
        <taxon>Bacillati</taxon>
        <taxon>Bacillota</taxon>
        <taxon>Bacilli</taxon>
        <taxon>Bacillales</taxon>
        <taxon>Bacillaceae</taxon>
        <taxon>Bacillus</taxon>
        <taxon>Bacillus cereus group</taxon>
    </lineage>
</organism>
<comment type="function">
    <text evidence="1">One of several proteins that assist in the late maturation steps of the functional core of the 30S ribosomal subunit. Associates with free 30S ribosomal subunits (but not with 30S subunits that are part of 70S ribosomes or polysomes). Required for efficient processing of 16S rRNA. May interact with the 5'-terminal helix region of 16S rRNA.</text>
</comment>
<comment type="subunit">
    <text evidence="1">Monomer. Binds 30S ribosomal subunits, but not 50S ribosomal subunits or 70S ribosomes.</text>
</comment>
<comment type="subcellular location">
    <subcellularLocation>
        <location evidence="1">Cytoplasm</location>
    </subcellularLocation>
</comment>
<comment type="similarity">
    <text evidence="1">Belongs to the RbfA family.</text>
</comment>